<evidence type="ECO:0000305" key="1"/>
<keyword id="KW-1185">Reference proteome</keyword>
<keyword id="KW-0677">Repeat</keyword>
<comment type="similarity">
    <text evidence="1">Belongs to the PPR family. PCMP-E subfamily.</text>
</comment>
<comment type="online information" name="Pentatricopeptide repeat proteins">
    <link uri="https://ppr.plantenergy.uwa.edu.au"/>
</comment>
<feature type="chain" id="PRO_0000342788" description="Putative pentatricopeptide repeat-containing protein At1g17630">
    <location>
        <begin position="1"/>
        <end position="731"/>
    </location>
</feature>
<feature type="repeat" description="PPR 1">
    <location>
        <begin position="88"/>
        <end position="118"/>
    </location>
</feature>
<feature type="repeat" description="PPR 2">
    <location>
        <begin position="122"/>
        <end position="156"/>
    </location>
</feature>
<feature type="repeat" description="PPR 3">
    <location>
        <begin position="157"/>
        <end position="191"/>
    </location>
</feature>
<feature type="repeat" description="PPR 4">
    <location>
        <begin position="192"/>
        <end position="222"/>
    </location>
</feature>
<feature type="repeat" description="PPR 5">
    <location>
        <begin position="223"/>
        <end position="257"/>
    </location>
</feature>
<feature type="repeat" description="PPR 6">
    <location>
        <begin position="258"/>
        <end position="292"/>
    </location>
</feature>
<feature type="repeat" description="PPR 7">
    <location>
        <begin position="293"/>
        <end position="327"/>
    </location>
</feature>
<feature type="repeat" description="PPR 8">
    <location>
        <begin position="328"/>
        <end position="358"/>
    </location>
</feature>
<feature type="repeat" description="PPR 9">
    <location>
        <begin position="359"/>
        <end position="393"/>
    </location>
</feature>
<feature type="repeat" description="PPR 10">
    <location>
        <begin position="398"/>
        <end position="432"/>
    </location>
</feature>
<feature type="repeat" description="PPR 11">
    <location>
        <begin position="433"/>
        <end position="467"/>
    </location>
</feature>
<feature type="repeat" description="PPR 12">
    <location>
        <begin position="468"/>
        <end position="498"/>
    </location>
</feature>
<feature type="repeat" description="PPR 13">
    <location>
        <begin position="499"/>
        <end position="533"/>
    </location>
</feature>
<feature type="repeat" description="PPR 14">
    <location>
        <begin position="534"/>
        <end position="569"/>
    </location>
</feature>
<feature type="repeat" description="PPR 15">
    <location>
        <begin position="570"/>
        <end position="600"/>
    </location>
</feature>
<feature type="region of interest" description="Type E motif">
    <location>
        <begin position="605"/>
        <end position="680"/>
    </location>
</feature>
<feature type="region of interest" description="Type E(+) motif">
    <location>
        <begin position="681"/>
        <end position="711"/>
    </location>
</feature>
<gene>
    <name type="primary">PCMP-E72</name>
    <name type="ordered locus">At1g17630</name>
    <name type="ORF">F1L3.33</name>
</gene>
<sequence length="731" mass="82272">MVHASLWQFRLQIIPWRLRNFCFLTSQCPYTSISSPDTVSVSSYYSLTSNNDQSLFHYFDHLLGLCLTAQQCRQVHAQVLLSDFIFRSGSLAANLISVYARLGLLLDARNVFETVSLVLLSDLRLWNSILKANVSHGLYENALELYRGMRQRGLTGDGYILPLILRACRYLGRFGLCRAFHTQVIQIGLKENLHVVNELLTLYPKAGRMGDAYNLFVEMPVRNRMSWNVMIKGFSQEYDCESAVKIFEWMQREEFKPDEVTWTSVLSCHSQCGKFEDVLKYFHLMRMSGNAVSGEALAVFFSVCAELEALSIAEKVHGYVIKGGFEEYLPSRNALIHVYGKQGKVKDAEHLFRQIRNKGIESWNSLITSFVDAGKLDEALSLFSELEEMNHVCNVKANVVTWTSVIKGCNVQGRGDDSLEYFRQMQFSKVLANSVTICCILSICAELPALNLGREIHGHVIRTSMSENILVQNALVNMYAKCGLLSEGSLVFEAIRDKDLISWNSIIKGYGMHGFAEKALSMFDRMISSGFHPDGIALVAVLSACSHAGLVEKGREIFYSMSKRFGLEPQQEHYACIVDLLGRVGFLKEASEIVKNMPMEPKVCVLGALLNSCRMHKNVDIAEGIASQLSVLEPERTGSYMLLSNIYSAGGRWEESANVRALAKKKDLKKVSGSSWIEVKKKKYKFSSGSIVQSEFETIYPVLEDLVSHMLKKGPTHDGNNYEDDLDLWTA</sequence>
<proteinExistence type="inferred from homology"/>
<dbReference type="EMBL" id="AC022492">
    <property type="protein sequence ID" value="AAF79473.1"/>
    <property type="molecule type" value="Genomic_DNA"/>
</dbReference>
<dbReference type="EMBL" id="CP002684">
    <property type="protein sequence ID" value="AEE29616.1"/>
    <property type="molecule type" value="Genomic_DNA"/>
</dbReference>
<dbReference type="EMBL" id="CP002684">
    <property type="protein sequence ID" value="ANM59320.1"/>
    <property type="molecule type" value="Genomic_DNA"/>
</dbReference>
<dbReference type="RefSeq" id="NP_001319030.1">
    <property type="nucleotide sequence ID" value="NM_001332315.1"/>
</dbReference>
<dbReference type="RefSeq" id="NP_173207.1">
    <property type="nucleotide sequence ID" value="NM_101626.1"/>
</dbReference>
<dbReference type="SMR" id="Q9LNP2"/>
<dbReference type="FunCoup" id="Q9LNP2">
    <property type="interactions" value="387"/>
</dbReference>
<dbReference type="PaxDb" id="3702-AT1G17630.1"/>
<dbReference type="ProteomicsDB" id="226312"/>
<dbReference type="EnsemblPlants" id="AT1G17630.1">
    <property type="protein sequence ID" value="AT1G17630.1"/>
    <property type="gene ID" value="AT1G17630"/>
</dbReference>
<dbReference type="EnsemblPlants" id="AT1G17630.2">
    <property type="protein sequence ID" value="AT1G17630.2"/>
    <property type="gene ID" value="AT1G17630"/>
</dbReference>
<dbReference type="GeneID" id="838340"/>
<dbReference type="Gramene" id="AT1G17630.1">
    <property type="protein sequence ID" value="AT1G17630.1"/>
    <property type="gene ID" value="AT1G17630"/>
</dbReference>
<dbReference type="Gramene" id="AT1G17630.2">
    <property type="protein sequence ID" value="AT1G17630.2"/>
    <property type="gene ID" value="AT1G17630"/>
</dbReference>
<dbReference type="KEGG" id="ath:AT1G17630"/>
<dbReference type="Araport" id="AT1G17630"/>
<dbReference type="TAIR" id="AT1G17630">
    <property type="gene designation" value="CWM1"/>
</dbReference>
<dbReference type="eggNOG" id="KOG4197">
    <property type="taxonomic scope" value="Eukaryota"/>
</dbReference>
<dbReference type="HOGENOM" id="CLU_002706_0_5_1"/>
<dbReference type="InParanoid" id="Q9LNP2"/>
<dbReference type="OMA" id="RPDLCVW"/>
<dbReference type="OrthoDB" id="881013at2759"/>
<dbReference type="PhylomeDB" id="Q9LNP2"/>
<dbReference type="PRO" id="PR:Q9LNP2"/>
<dbReference type="Proteomes" id="UP000006548">
    <property type="component" value="Chromosome 1"/>
</dbReference>
<dbReference type="ExpressionAtlas" id="Q9LNP2">
    <property type="expression patterns" value="baseline and differential"/>
</dbReference>
<dbReference type="GO" id="GO:0003723">
    <property type="term" value="F:RNA binding"/>
    <property type="evidence" value="ECO:0007669"/>
    <property type="project" value="InterPro"/>
</dbReference>
<dbReference type="GO" id="GO:0031930">
    <property type="term" value="P:mitochondria-nucleus signaling pathway"/>
    <property type="evidence" value="ECO:0000316"/>
    <property type="project" value="TAIR"/>
</dbReference>
<dbReference type="GO" id="GO:0009451">
    <property type="term" value="P:RNA modification"/>
    <property type="evidence" value="ECO:0007669"/>
    <property type="project" value="InterPro"/>
</dbReference>
<dbReference type="FunFam" id="1.25.40.10:FF:000280">
    <property type="entry name" value="Pentatricopeptide repeat-containing protein"/>
    <property type="match status" value="1"/>
</dbReference>
<dbReference type="FunFam" id="1.25.40.10:FF:000393">
    <property type="entry name" value="Pentatricopeptide repeat-containing protein At1g20230"/>
    <property type="match status" value="2"/>
</dbReference>
<dbReference type="FunFam" id="1.25.40.10:FF:001180">
    <property type="entry name" value="Pentatricopeptide repeat-containing protein At2g03380, mitochondrial"/>
    <property type="match status" value="1"/>
</dbReference>
<dbReference type="FunFam" id="1.25.40.10:FF:000031">
    <property type="entry name" value="Pentatricopeptide repeat-containing protein mitochondrial"/>
    <property type="match status" value="1"/>
</dbReference>
<dbReference type="Gene3D" id="1.25.40.10">
    <property type="entry name" value="Tetratricopeptide repeat domain"/>
    <property type="match status" value="5"/>
</dbReference>
<dbReference type="InterPro" id="IPR046848">
    <property type="entry name" value="E_motif"/>
</dbReference>
<dbReference type="InterPro" id="IPR002885">
    <property type="entry name" value="Pentatricopeptide_rpt"/>
</dbReference>
<dbReference type="InterPro" id="IPR046960">
    <property type="entry name" value="PPR_At4g14850-like_plant"/>
</dbReference>
<dbReference type="InterPro" id="IPR011990">
    <property type="entry name" value="TPR-like_helical_dom_sf"/>
</dbReference>
<dbReference type="NCBIfam" id="TIGR00756">
    <property type="entry name" value="PPR"/>
    <property type="match status" value="7"/>
</dbReference>
<dbReference type="PANTHER" id="PTHR47926:SF344">
    <property type="entry name" value="OS07G0636900 PROTEIN"/>
    <property type="match status" value="1"/>
</dbReference>
<dbReference type="PANTHER" id="PTHR47926">
    <property type="entry name" value="PENTATRICOPEPTIDE REPEAT-CONTAINING PROTEIN"/>
    <property type="match status" value="1"/>
</dbReference>
<dbReference type="Pfam" id="PF20431">
    <property type="entry name" value="E_motif"/>
    <property type="match status" value="1"/>
</dbReference>
<dbReference type="Pfam" id="PF01535">
    <property type="entry name" value="PPR"/>
    <property type="match status" value="7"/>
</dbReference>
<dbReference type="Pfam" id="PF13041">
    <property type="entry name" value="PPR_2"/>
    <property type="match status" value="1"/>
</dbReference>
<dbReference type="PROSITE" id="PS51375">
    <property type="entry name" value="PPR"/>
    <property type="match status" value="12"/>
</dbReference>
<name>PPR47_ARATH</name>
<protein>
    <recommendedName>
        <fullName>Putative pentatricopeptide repeat-containing protein At1g17630</fullName>
    </recommendedName>
</protein>
<reference key="1">
    <citation type="journal article" date="2000" name="Nature">
        <title>Sequence and analysis of chromosome 1 of the plant Arabidopsis thaliana.</title>
        <authorList>
            <person name="Theologis A."/>
            <person name="Ecker J.R."/>
            <person name="Palm C.J."/>
            <person name="Federspiel N.A."/>
            <person name="Kaul S."/>
            <person name="White O."/>
            <person name="Alonso J."/>
            <person name="Altafi H."/>
            <person name="Araujo R."/>
            <person name="Bowman C.L."/>
            <person name="Brooks S.Y."/>
            <person name="Buehler E."/>
            <person name="Chan A."/>
            <person name="Chao Q."/>
            <person name="Chen H."/>
            <person name="Cheuk R.F."/>
            <person name="Chin C.W."/>
            <person name="Chung M.K."/>
            <person name="Conn L."/>
            <person name="Conway A.B."/>
            <person name="Conway A.R."/>
            <person name="Creasy T.H."/>
            <person name="Dewar K."/>
            <person name="Dunn P."/>
            <person name="Etgu P."/>
            <person name="Feldblyum T.V."/>
            <person name="Feng J.-D."/>
            <person name="Fong B."/>
            <person name="Fujii C.Y."/>
            <person name="Gill J.E."/>
            <person name="Goldsmith A.D."/>
            <person name="Haas B."/>
            <person name="Hansen N.F."/>
            <person name="Hughes B."/>
            <person name="Huizar L."/>
            <person name="Hunter J.L."/>
            <person name="Jenkins J."/>
            <person name="Johnson-Hopson C."/>
            <person name="Khan S."/>
            <person name="Khaykin E."/>
            <person name="Kim C.J."/>
            <person name="Koo H.L."/>
            <person name="Kremenetskaia I."/>
            <person name="Kurtz D.B."/>
            <person name="Kwan A."/>
            <person name="Lam B."/>
            <person name="Langin-Hooper S."/>
            <person name="Lee A."/>
            <person name="Lee J.M."/>
            <person name="Lenz C.A."/>
            <person name="Li J.H."/>
            <person name="Li Y.-P."/>
            <person name="Lin X."/>
            <person name="Liu S.X."/>
            <person name="Liu Z.A."/>
            <person name="Luros J.S."/>
            <person name="Maiti R."/>
            <person name="Marziali A."/>
            <person name="Militscher J."/>
            <person name="Miranda M."/>
            <person name="Nguyen M."/>
            <person name="Nierman W.C."/>
            <person name="Osborne B.I."/>
            <person name="Pai G."/>
            <person name="Peterson J."/>
            <person name="Pham P.K."/>
            <person name="Rizzo M."/>
            <person name="Rooney T."/>
            <person name="Rowley D."/>
            <person name="Sakano H."/>
            <person name="Salzberg S.L."/>
            <person name="Schwartz J.R."/>
            <person name="Shinn P."/>
            <person name="Southwick A.M."/>
            <person name="Sun H."/>
            <person name="Tallon L.J."/>
            <person name="Tambunga G."/>
            <person name="Toriumi M.J."/>
            <person name="Town C.D."/>
            <person name="Utterback T."/>
            <person name="Van Aken S."/>
            <person name="Vaysberg M."/>
            <person name="Vysotskaia V.S."/>
            <person name="Walker M."/>
            <person name="Wu D."/>
            <person name="Yu G."/>
            <person name="Fraser C.M."/>
            <person name="Venter J.C."/>
            <person name="Davis R.W."/>
        </authorList>
    </citation>
    <scope>NUCLEOTIDE SEQUENCE [LARGE SCALE GENOMIC DNA]</scope>
    <source>
        <strain>cv. Columbia</strain>
    </source>
</reference>
<reference key="2">
    <citation type="journal article" date="2017" name="Plant J.">
        <title>Araport11: a complete reannotation of the Arabidopsis thaliana reference genome.</title>
        <authorList>
            <person name="Cheng C.Y."/>
            <person name="Krishnakumar V."/>
            <person name="Chan A.P."/>
            <person name="Thibaud-Nissen F."/>
            <person name="Schobel S."/>
            <person name="Town C.D."/>
        </authorList>
    </citation>
    <scope>GENOME REANNOTATION</scope>
    <source>
        <strain>cv. Columbia</strain>
    </source>
</reference>
<reference key="3">
    <citation type="journal article" date="2004" name="Plant Cell">
        <title>Genome-wide analysis of Arabidopsis pentatricopeptide repeat proteins reveals their essential role in organelle biogenesis.</title>
        <authorList>
            <person name="Lurin C."/>
            <person name="Andres C."/>
            <person name="Aubourg S."/>
            <person name="Bellaoui M."/>
            <person name="Bitton F."/>
            <person name="Bruyere C."/>
            <person name="Caboche M."/>
            <person name="Debast C."/>
            <person name="Gualberto J."/>
            <person name="Hoffmann B."/>
            <person name="Lecharny A."/>
            <person name="Le Ret M."/>
            <person name="Martin-Magniette M.-L."/>
            <person name="Mireau H."/>
            <person name="Peeters N."/>
            <person name="Renou J.-P."/>
            <person name="Szurek B."/>
            <person name="Taconnat L."/>
            <person name="Small I."/>
        </authorList>
    </citation>
    <scope>GENE FAMILY</scope>
</reference>
<accession>Q9LNP2</accession>
<organism>
    <name type="scientific">Arabidopsis thaliana</name>
    <name type="common">Mouse-ear cress</name>
    <dbReference type="NCBI Taxonomy" id="3702"/>
    <lineage>
        <taxon>Eukaryota</taxon>
        <taxon>Viridiplantae</taxon>
        <taxon>Streptophyta</taxon>
        <taxon>Embryophyta</taxon>
        <taxon>Tracheophyta</taxon>
        <taxon>Spermatophyta</taxon>
        <taxon>Magnoliopsida</taxon>
        <taxon>eudicotyledons</taxon>
        <taxon>Gunneridae</taxon>
        <taxon>Pentapetalae</taxon>
        <taxon>rosids</taxon>
        <taxon>malvids</taxon>
        <taxon>Brassicales</taxon>
        <taxon>Brassicaceae</taxon>
        <taxon>Camelineae</taxon>
        <taxon>Arabidopsis</taxon>
    </lineage>
</organism>